<keyword id="KW-0067">ATP-binding</keyword>
<keyword id="KW-0347">Helicase</keyword>
<keyword id="KW-0378">Hydrolase</keyword>
<keyword id="KW-0547">Nucleotide-binding</keyword>
<keyword id="KW-0539">Nucleus</keyword>
<keyword id="KW-1185">Reference proteome</keyword>
<keyword id="KW-0690">Ribosome biogenesis</keyword>
<keyword id="KW-0694">RNA-binding</keyword>
<keyword id="KW-0698">rRNA processing</keyword>
<dbReference type="EC" id="3.6.4.13"/>
<dbReference type="EMBL" id="AE017353">
    <property type="protein sequence ID" value="AAW46985.1"/>
    <property type="molecule type" value="Genomic_DNA"/>
</dbReference>
<dbReference type="RefSeq" id="XP_568502.1">
    <property type="nucleotide sequence ID" value="XM_568502.1"/>
</dbReference>
<dbReference type="SMR" id="P0CR10"/>
<dbReference type="FunCoup" id="P0CR10">
    <property type="interactions" value="520"/>
</dbReference>
<dbReference type="STRING" id="214684.P0CR10"/>
<dbReference type="PaxDb" id="214684-P0CR10"/>
<dbReference type="EnsemblFungi" id="AAW46985">
    <property type="protein sequence ID" value="AAW46985"/>
    <property type="gene ID" value="CNM02050"/>
</dbReference>
<dbReference type="GeneID" id="3255082"/>
<dbReference type="KEGG" id="cne:CNM02050"/>
<dbReference type="VEuPathDB" id="FungiDB:CNM02050"/>
<dbReference type="eggNOG" id="KOG0346">
    <property type="taxonomic scope" value="Eukaryota"/>
</dbReference>
<dbReference type="HOGENOM" id="CLU_003041_17_1_1"/>
<dbReference type="InParanoid" id="P0CR10"/>
<dbReference type="OMA" id="SRCHVIN"/>
<dbReference type="OrthoDB" id="1191041at2759"/>
<dbReference type="Proteomes" id="UP000002149">
    <property type="component" value="Chromosome 13"/>
</dbReference>
<dbReference type="GO" id="GO:0005730">
    <property type="term" value="C:nucleolus"/>
    <property type="evidence" value="ECO:0000318"/>
    <property type="project" value="GO_Central"/>
</dbReference>
<dbReference type="GO" id="GO:0005524">
    <property type="term" value="F:ATP binding"/>
    <property type="evidence" value="ECO:0007669"/>
    <property type="project" value="UniProtKB-KW"/>
</dbReference>
<dbReference type="GO" id="GO:0016887">
    <property type="term" value="F:ATP hydrolysis activity"/>
    <property type="evidence" value="ECO:0007669"/>
    <property type="project" value="RHEA"/>
</dbReference>
<dbReference type="GO" id="GO:0003723">
    <property type="term" value="F:RNA binding"/>
    <property type="evidence" value="ECO:0007669"/>
    <property type="project" value="UniProtKB-KW"/>
</dbReference>
<dbReference type="GO" id="GO:0003724">
    <property type="term" value="F:RNA helicase activity"/>
    <property type="evidence" value="ECO:0007669"/>
    <property type="project" value="UniProtKB-EC"/>
</dbReference>
<dbReference type="GO" id="GO:0006364">
    <property type="term" value="P:rRNA processing"/>
    <property type="evidence" value="ECO:0007669"/>
    <property type="project" value="UniProtKB-KW"/>
</dbReference>
<dbReference type="CDD" id="cd17961">
    <property type="entry name" value="DEADc_DDX56"/>
    <property type="match status" value="1"/>
</dbReference>
<dbReference type="CDD" id="cd18787">
    <property type="entry name" value="SF2_C_DEAD"/>
    <property type="match status" value="1"/>
</dbReference>
<dbReference type="Gene3D" id="3.40.50.300">
    <property type="entry name" value="P-loop containing nucleotide triphosphate hydrolases"/>
    <property type="match status" value="2"/>
</dbReference>
<dbReference type="InterPro" id="IPR011545">
    <property type="entry name" value="DEAD/DEAH_box_helicase_dom"/>
</dbReference>
<dbReference type="InterPro" id="IPR050079">
    <property type="entry name" value="DEAD_box_RNA_helicase"/>
</dbReference>
<dbReference type="InterPro" id="IPR014001">
    <property type="entry name" value="Helicase_ATP-bd"/>
</dbReference>
<dbReference type="InterPro" id="IPR001650">
    <property type="entry name" value="Helicase_C-like"/>
</dbReference>
<dbReference type="InterPro" id="IPR027417">
    <property type="entry name" value="P-loop_NTPase"/>
</dbReference>
<dbReference type="PANTHER" id="PTHR47959">
    <property type="entry name" value="ATP-DEPENDENT RNA HELICASE RHLE-RELATED"/>
    <property type="match status" value="1"/>
</dbReference>
<dbReference type="PANTHER" id="PTHR47959:SF21">
    <property type="entry name" value="DEAD-BOX HELICASE 56"/>
    <property type="match status" value="1"/>
</dbReference>
<dbReference type="Pfam" id="PF00270">
    <property type="entry name" value="DEAD"/>
    <property type="match status" value="1"/>
</dbReference>
<dbReference type="Pfam" id="PF00271">
    <property type="entry name" value="Helicase_C"/>
    <property type="match status" value="2"/>
</dbReference>
<dbReference type="SMART" id="SM00487">
    <property type="entry name" value="DEXDc"/>
    <property type="match status" value="1"/>
</dbReference>
<dbReference type="SMART" id="SM00490">
    <property type="entry name" value="HELICc"/>
    <property type="match status" value="1"/>
</dbReference>
<dbReference type="SUPFAM" id="SSF52540">
    <property type="entry name" value="P-loop containing nucleoside triphosphate hydrolases"/>
    <property type="match status" value="2"/>
</dbReference>
<dbReference type="PROSITE" id="PS51192">
    <property type="entry name" value="HELICASE_ATP_BIND_1"/>
    <property type="match status" value="1"/>
</dbReference>
<dbReference type="PROSITE" id="PS51194">
    <property type="entry name" value="HELICASE_CTER"/>
    <property type="match status" value="1"/>
</dbReference>
<gene>
    <name type="primary">DBP9</name>
    <name type="ordered locus">CNM02050</name>
</gene>
<organism>
    <name type="scientific">Cryptococcus neoformans var. neoformans serotype D (strain JEC21 / ATCC MYA-565)</name>
    <name type="common">Filobasidiella neoformans</name>
    <dbReference type="NCBI Taxonomy" id="214684"/>
    <lineage>
        <taxon>Eukaryota</taxon>
        <taxon>Fungi</taxon>
        <taxon>Dikarya</taxon>
        <taxon>Basidiomycota</taxon>
        <taxon>Agaricomycotina</taxon>
        <taxon>Tremellomycetes</taxon>
        <taxon>Tremellales</taxon>
        <taxon>Cryptococcaceae</taxon>
        <taxon>Cryptococcus</taxon>
        <taxon>Cryptococcus neoformans species complex</taxon>
    </lineage>
</organism>
<proteinExistence type="inferred from homology"/>
<accession>P0CR10</accession>
<accession>Q55I26</accession>
<accession>Q5K7L2</accession>
<comment type="function">
    <text evidence="1">ATP-binding RNA helicase involved in the biogenesis of 60S ribosomal subunits and is required for the normal formation of 25S and 5.8S rRNAs.</text>
</comment>
<comment type="catalytic activity">
    <reaction>
        <text>ATP + H2O = ADP + phosphate + H(+)</text>
        <dbReference type="Rhea" id="RHEA:13065"/>
        <dbReference type="ChEBI" id="CHEBI:15377"/>
        <dbReference type="ChEBI" id="CHEBI:15378"/>
        <dbReference type="ChEBI" id="CHEBI:30616"/>
        <dbReference type="ChEBI" id="CHEBI:43474"/>
        <dbReference type="ChEBI" id="CHEBI:456216"/>
        <dbReference type="EC" id="3.6.4.13"/>
    </reaction>
</comment>
<comment type="subcellular location">
    <subcellularLocation>
        <location evidence="1">Nucleus</location>
        <location evidence="1">Nucleolus</location>
    </subcellularLocation>
</comment>
<comment type="domain">
    <text>The Q motif is unique to and characteristic of the DEAD box family of RNA helicases and controls ATP binding and hydrolysis.</text>
</comment>
<comment type="similarity">
    <text evidence="5">Belongs to the DEAD box helicase family. DDX56/DBP9 subfamily.</text>
</comment>
<feature type="chain" id="PRO_0000232339" description="ATP-dependent RNA helicase DBP9">
    <location>
        <begin position="1"/>
        <end position="627"/>
    </location>
</feature>
<feature type="domain" description="Helicase ATP-binding" evidence="2">
    <location>
        <begin position="52"/>
        <end position="238"/>
    </location>
</feature>
<feature type="domain" description="Helicase C-terminal" evidence="3">
    <location>
        <begin position="249"/>
        <end position="487"/>
    </location>
</feature>
<feature type="region of interest" description="Disordered" evidence="4">
    <location>
        <begin position="337"/>
        <end position="410"/>
    </location>
</feature>
<feature type="region of interest" description="Disordered" evidence="4">
    <location>
        <begin position="586"/>
        <end position="627"/>
    </location>
</feature>
<feature type="short sequence motif" description="Q motif">
    <location>
        <begin position="40"/>
        <end position="48"/>
    </location>
</feature>
<feature type="short sequence motif" description="DEAD box">
    <location>
        <begin position="181"/>
        <end position="184"/>
    </location>
</feature>
<feature type="compositionally biased region" description="Acidic residues" evidence="4">
    <location>
        <begin position="340"/>
        <end position="365"/>
    </location>
</feature>
<feature type="compositionally biased region" description="Basic and acidic residues" evidence="4">
    <location>
        <begin position="366"/>
        <end position="378"/>
    </location>
</feature>
<feature type="compositionally biased region" description="Basic residues" evidence="4">
    <location>
        <begin position="599"/>
        <end position="618"/>
    </location>
</feature>
<feature type="binding site" evidence="2">
    <location>
        <begin position="65"/>
        <end position="72"/>
    </location>
    <ligand>
        <name>ATP</name>
        <dbReference type="ChEBI" id="CHEBI:30616"/>
    </ligand>
</feature>
<name>DBP9_CRYNJ</name>
<protein>
    <recommendedName>
        <fullName>ATP-dependent RNA helicase DBP9</fullName>
        <ecNumber>3.6.4.13</ecNumber>
    </recommendedName>
</protein>
<reference key="1">
    <citation type="journal article" date="2005" name="Science">
        <title>The genome of the basidiomycetous yeast and human pathogen Cryptococcus neoformans.</title>
        <authorList>
            <person name="Loftus B.J."/>
            <person name="Fung E."/>
            <person name="Roncaglia P."/>
            <person name="Rowley D."/>
            <person name="Amedeo P."/>
            <person name="Bruno D."/>
            <person name="Vamathevan J."/>
            <person name="Miranda M."/>
            <person name="Anderson I.J."/>
            <person name="Fraser J.A."/>
            <person name="Allen J.E."/>
            <person name="Bosdet I.E."/>
            <person name="Brent M.R."/>
            <person name="Chiu R."/>
            <person name="Doering T.L."/>
            <person name="Donlin M.J."/>
            <person name="D'Souza C.A."/>
            <person name="Fox D.S."/>
            <person name="Grinberg V."/>
            <person name="Fu J."/>
            <person name="Fukushima M."/>
            <person name="Haas B.J."/>
            <person name="Huang J.C."/>
            <person name="Janbon G."/>
            <person name="Jones S.J.M."/>
            <person name="Koo H.L."/>
            <person name="Krzywinski M.I."/>
            <person name="Kwon-Chung K.J."/>
            <person name="Lengeler K.B."/>
            <person name="Maiti R."/>
            <person name="Marra M.A."/>
            <person name="Marra R.E."/>
            <person name="Mathewson C.A."/>
            <person name="Mitchell T.G."/>
            <person name="Pertea M."/>
            <person name="Riggs F.R."/>
            <person name="Salzberg S.L."/>
            <person name="Schein J.E."/>
            <person name="Shvartsbeyn A."/>
            <person name="Shin H."/>
            <person name="Shumway M."/>
            <person name="Specht C.A."/>
            <person name="Suh B.B."/>
            <person name="Tenney A."/>
            <person name="Utterback T.R."/>
            <person name="Wickes B.L."/>
            <person name="Wortman J.R."/>
            <person name="Wye N.H."/>
            <person name="Kronstad J.W."/>
            <person name="Lodge J.K."/>
            <person name="Heitman J."/>
            <person name="Davis R.W."/>
            <person name="Fraser C.M."/>
            <person name="Hyman R.W."/>
        </authorList>
    </citation>
    <scope>NUCLEOTIDE SEQUENCE [LARGE SCALE GENOMIC DNA]</scope>
    <source>
        <strain>JEC21 / ATCC MYA-565</strain>
    </source>
</reference>
<sequence length="627" mass="68915">MLSKSNQPSDALLDADFSFSQPPFSTLIDSRVLVALADQKFAHPTLVQAKAIPLLLEGKDVLARARTGSGKTAAYIVPAVQKILEAKADLSPASAEYQATRAIILVPTKELALQVSSFTKNVTKYCDGLVQCVDVAAGGASIQRVLLNDKPDIVISTPTKLLSLLQSKSLSLSQLSFLAIDEADLLLSYGFKDDLTRIMDPTSGWIPKLGVQGCLMSATLSDDVEGIKGLVLRNPAILTLSEPASASSLLSQHYTHTSERDKFLLIYVLLKLKLIRGKSIIFVNDVERGYRVKLFLEQFGVKCCVVNSELPLASRYHVVEEFNRGVYDVVVATDEGAGADAEEEEDVKQEESESEGEEDEDDDKEAEDKEKEAKEEAKPAPGPSKRRATSPPSKPNKRARRADPTSSLARGIDFTSASSVINFDLPLTSTSYMHRVGRTARAGQSGLALSFVVPRENWGKDKAVSIKSAEKDEKVFERIKERVKKESDSEIKEWDWKGRKGEIEGFRYRMEDALKAVTGKRVAEARREEVRRELLNSEKLKSHFAANPLDLSYLRHDAPLHPARQQTHLKHVPNYLMPKIAALPTGGDVTDHAGVGFSRRGRGGHRGRGGRGSKSGRGKKVDPLKFK</sequence>
<evidence type="ECO:0000250" key="1"/>
<evidence type="ECO:0000255" key="2">
    <source>
        <dbReference type="PROSITE-ProRule" id="PRU00541"/>
    </source>
</evidence>
<evidence type="ECO:0000255" key="3">
    <source>
        <dbReference type="PROSITE-ProRule" id="PRU00542"/>
    </source>
</evidence>
<evidence type="ECO:0000256" key="4">
    <source>
        <dbReference type="SAM" id="MobiDB-lite"/>
    </source>
</evidence>
<evidence type="ECO:0000305" key="5"/>